<feature type="signal peptide" evidence="2">
    <location>
        <begin position="1"/>
        <end position="20"/>
    </location>
</feature>
<feature type="propeptide" id="PRO_0000401781" evidence="1">
    <location>
        <begin position="21"/>
        <end position="26"/>
    </location>
</feature>
<feature type="chain" id="PRO_0000401782" description="U8-lycotoxin-Ls1w">
    <location>
        <begin position="27"/>
        <end position="77"/>
    </location>
</feature>
<comment type="subcellular location">
    <subcellularLocation>
        <location evidence="1">Secreted</location>
    </subcellularLocation>
</comment>
<comment type="tissue specificity">
    <text>Expressed by the venom gland.</text>
</comment>
<comment type="PTM">
    <text evidence="1">Contains 4 disulfide bonds.</text>
</comment>
<comment type="similarity">
    <text evidence="3">Belongs to the neurotoxin 19 (CSTX) family. 08 (U8-Lctx) subfamily.</text>
</comment>
<dbReference type="EMBL" id="EU926064">
    <property type="protein sequence ID" value="ACI41396.1"/>
    <property type="molecule type" value="mRNA"/>
</dbReference>
<dbReference type="EMBL" id="FM864068">
    <property type="protein sequence ID" value="CAS03665.1"/>
    <property type="molecule type" value="mRNA"/>
</dbReference>
<dbReference type="SMR" id="B6DCY0"/>
<dbReference type="ArachnoServer" id="AS001003">
    <property type="toxin name" value="U8-lycotoxin-Ls1w"/>
</dbReference>
<dbReference type="GO" id="GO:0005576">
    <property type="term" value="C:extracellular region"/>
    <property type="evidence" value="ECO:0007669"/>
    <property type="project" value="UniProtKB-SubCell"/>
</dbReference>
<dbReference type="GO" id="GO:0090729">
    <property type="term" value="F:toxin activity"/>
    <property type="evidence" value="ECO:0007669"/>
    <property type="project" value="UniProtKB-KW"/>
</dbReference>
<dbReference type="InterPro" id="IPR019553">
    <property type="entry name" value="Spider_toxin_CSTX_knottin"/>
</dbReference>
<dbReference type="Pfam" id="PF10530">
    <property type="entry name" value="Toxin_35"/>
    <property type="match status" value="1"/>
</dbReference>
<accession>B6DCY0</accession>
<proteinExistence type="evidence at transcript level"/>
<protein>
    <recommendedName>
        <fullName>U8-lycotoxin-Ls1w</fullName>
    </recommendedName>
    <alternativeName>
        <fullName>Toxin-like structure LSTX-H9</fullName>
    </alternativeName>
</protein>
<organism>
    <name type="scientific">Lycosa singoriensis</name>
    <name type="common">Wolf spider</name>
    <name type="synonym">Aranea singoriensis</name>
    <dbReference type="NCBI Taxonomy" id="434756"/>
    <lineage>
        <taxon>Eukaryota</taxon>
        <taxon>Metazoa</taxon>
        <taxon>Ecdysozoa</taxon>
        <taxon>Arthropoda</taxon>
        <taxon>Chelicerata</taxon>
        <taxon>Arachnida</taxon>
        <taxon>Araneae</taxon>
        <taxon>Araneomorphae</taxon>
        <taxon>Entelegynae</taxon>
        <taxon>Lycosoidea</taxon>
        <taxon>Lycosidae</taxon>
        <taxon>Lycosa</taxon>
    </lineage>
</organism>
<evidence type="ECO:0000250" key="1"/>
<evidence type="ECO:0000255" key="2"/>
<evidence type="ECO:0000305" key="3"/>
<sequence length="77" mass="8610">MKLIIFTGLVLFAIVSLIEAQAENEKACLPQYQVRTDAPGNCCSNLVCDCYGRYKSGARIGRNCFCLQKGVIYKREN</sequence>
<reference key="1">
    <citation type="journal article" date="2010" name="Zoology">
        <title>Transcriptome analysis of the venom glands of the Chinese wolf spider Lycosa singoriensis.</title>
        <authorList>
            <person name="Zhang Y."/>
            <person name="Chen J."/>
            <person name="Tang X."/>
            <person name="Wang F."/>
            <person name="Jiang L."/>
            <person name="Xiong X."/>
            <person name="Wang M."/>
            <person name="Rong M."/>
            <person name="Liu Z."/>
            <person name="Liang S."/>
        </authorList>
    </citation>
    <scope>NUCLEOTIDE SEQUENCE [LARGE SCALE MRNA]</scope>
    <source>
        <tissue>Venom gland</tissue>
    </source>
</reference>
<keyword id="KW-1015">Disulfide bond</keyword>
<keyword id="KW-0964">Secreted</keyword>
<keyword id="KW-0732">Signal</keyword>
<keyword id="KW-0800">Toxin</keyword>
<name>TX809_LYCSI</name>